<name>NPRE_BACPU</name>
<feature type="chain" id="PRO_0000078173" description="Neutral protease NprE">
    <location>
        <begin position="1"/>
        <end position="300"/>
    </location>
</feature>
<feature type="active site" evidence="3">
    <location>
        <position position="144"/>
    </location>
</feature>
<feature type="active site" description="Proton donor" evidence="3">
    <location>
        <position position="228"/>
    </location>
</feature>
<feature type="binding site" evidence="2">
    <location>
        <position position="139"/>
    </location>
    <ligand>
        <name>Ca(2+)</name>
        <dbReference type="ChEBI" id="CHEBI:29108"/>
        <label>1</label>
    </ligand>
</feature>
<feature type="binding site" evidence="3">
    <location>
        <position position="143"/>
    </location>
    <ligand>
        <name>Zn(2+)</name>
        <dbReference type="ChEBI" id="CHEBI:29105"/>
        <note>catalytic</note>
    </ligand>
</feature>
<feature type="binding site" evidence="3">
    <location>
        <position position="147"/>
    </location>
    <ligand>
        <name>Zn(2+)</name>
        <dbReference type="ChEBI" id="CHEBI:29105"/>
        <note>catalytic</note>
    </ligand>
</feature>
<feature type="binding site" evidence="3">
    <location>
        <position position="167"/>
    </location>
    <ligand>
        <name>Zn(2+)</name>
        <dbReference type="ChEBI" id="CHEBI:29105"/>
        <note>catalytic</note>
    </ligand>
</feature>
<feature type="binding site" evidence="2">
    <location>
        <position position="178"/>
    </location>
    <ligand>
        <name>Ca(2+)</name>
        <dbReference type="ChEBI" id="CHEBI:29108"/>
        <label>1</label>
    </ligand>
</feature>
<feature type="binding site" evidence="2">
    <location>
        <position position="178"/>
    </location>
    <ligand>
        <name>Ca(2+)</name>
        <dbReference type="ChEBI" id="CHEBI:29108"/>
        <label>2</label>
    </ligand>
</feature>
<feature type="binding site" evidence="2">
    <location>
        <position position="181"/>
    </location>
    <ligand>
        <name>Ca(2+)</name>
        <dbReference type="ChEBI" id="CHEBI:29108"/>
        <label>1</label>
    </ligand>
</feature>
<feature type="binding site" evidence="2">
    <location>
        <position position="181"/>
    </location>
    <ligand>
        <name>Ca(2+)</name>
        <dbReference type="ChEBI" id="CHEBI:29108"/>
        <label>2</label>
    </ligand>
</feature>
<feature type="binding site" evidence="2">
    <location>
        <position position="183"/>
    </location>
    <ligand>
        <name>Ca(2+)</name>
        <dbReference type="ChEBI" id="CHEBI:29108"/>
        <label>1</label>
    </ligand>
</feature>
<feature type="binding site" evidence="2">
    <location>
        <position position="186"/>
    </location>
    <ligand>
        <name>Ca(2+)</name>
        <dbReference type="ChEBI" id="CHEBI:29108"/>
        <label>1</label>
    </ligand>
</feature>
<feature type="binding site" evidence="2">
    <location>
        <position position="186"/>
    </location>
    <ligand>
        <name>Ca(2+)</name>
        <dbReference type="ChEBI" id="CHEBI:29108"/>
        <label>2</label>
    </ligand>
</feature>
<accession>P68734</accession>
<accession>P06142</accession>
<accession>P25268</accession>
<sequence length="300" mass="32674">AAATGSGTTLKGATVPLNISYEGGKYVLRDLSKPTGTQIITYDLQNRQSRLPGTLVSSTTKTFTSSSQRAAVDAHYNLGKVYDYFYSNFKRNSYDNKGSKIVSSVHYGTQYNNAAWTGDQMIYGDGDGSFFSPLSGSLDVTAHEMTHGVTQETANLIYENQPGALNESFSDVFGYFNDTEDWDIGEDITVSQPALRSLSNPTKYNQPDNYANYRNLPNTDEGDYGGVHTNSGIPNKAAYNTITKLGVSKSQQIYYRALTTYLTPSSTFKDAKAALIQSARDLYGSTDAAKVEAAWNAVGL</sequence>
<organism>
    <name type="scientific">Bacillus pumilus</name>
    <name type="common">Bacillus mesentericus</name>
    <dbReference type="NCBI Taxonomy" id="1408"/>
    <lineage>
        <taxon>Bacteria</taxon>
        <taxon>Bacillati</taxon>
        <taxon>Bacillota</taxon>
        <taxon>Bacilli</taxon>
        <taxon>Bacillales</taxon>
        <taxon>Bacillaceae</taxon>
        <taxon>Bacillus</taxon>
    </lineage>
</organism>
<gene>
    <name type="primary">nprE</name>
</gene>
<comment type="function">
    <text>Extracellular zinc metalloprotease.</text>
</comment>
<comment type="catalytic activity">
    <reaction>
        <text>Similar, but not identical, to that of thermolysin.</text>
        <dbReference type="EC" id="3.4.24.28"/>
    </reaction>
</comment>
<comment type="cofactor">
    <cofactor evidence="4">
        <name>Ca(2+)</name>
        <dbReference type="ChEBI" id="CHEBI:29108"/>
    </cofactor>
    <text evidence="4">Binds 4 Ca(2+) ions per subunit.</text>
</comment>
<comment type="cofactor">
    <cofactor evidence="1">
        <name>Zn(2+)</name>
        <dbReference type="ChEBI" id="CHEBI:29105"/>
    </cofactor>
    <text evidence="1">Binds 1 zinc ion per subunit.</text>
</comment>
<comment type="biophysicochemical properties">
    <temperatureDependence>
        <text>Thermolabile.</text>
    </temperatureDependence>
</comment>
<comment type="subcellular location">
    <subcellularLocation>
        <location>Secreted</location>
    </subcellularLocation>
</comment>
<comment type="similarity">
    <text evidence="4">Belongs to the peptidase M4 family.</text>
</comment>
<reference key="1">
    <citation type="journal article" date="1990" name="Biochemistry">
        <title>Primary structure of a zinc protease from Bacillus mesentericus strain 76.</title>
        <authorList>
            <person name="Stoeva S."/>
            <person name="Kleinschmidt T."/>
            <person name="Mesrob B."/>
            <person name="Braunitzer G."/>
        </authorList>
    </citation>
    <scope>PROTEIN SEQUENCE</scope>
    <source>
        <strain>76</strain>
    </source>
</reference>
<keyword id="KW-0106">Calcium</keyword>
<keyword id="KW-0903">Direct protein sequencing</keyword>
<keyword id="KW-0378">Hydrolase</keyword>
<keyword id="KW-0479">Metal-binding</keyword>
<keyword id="KW-0482">Metalloprotease</keyword>
<keyword id="KW-0645">Protease</keyword>
<keyword id="KW-0964">Secreted</keyword>
<keyword id="KW-0862">Zinc</keyword>
<proteinExistence type="evidence at protein level"/>
<evidence type="ECO:0000250" key="1"/>
<evidence type="ECO:0000255" key="2"/>
<evidence type="ECO:0000255" key="3">
    <source>
        <dbReference type="PROSITE-ProRule" id="PRU10095"/>
    </source>
</evidence>
<evidence type="ECO:0000305" key="4"/>
<dbReference type="EC" id="3.4.24.28"/>
<dbReference type="SMR" id="P68734"/>
<dbReference type="GO" id="GO:0005576">
    <property type="term" value="C:extracellular region"/>
    <property type="evidence" value="ECO:0007669"/>
    <property type="project" value="UniProtKB-SubCell"/>
</dbReference>
<dbReference type="GO" id="GO:0046872">
    <property type="term" value="F:metal ion binding"/>
    <property type="evidence" value="ECO:0007669"/>
    <property type="project" value="UniProtKB-KW"/>
</dbReference>
<dbReference type="GO" id="GO:0004222">
    <property type="term" value="F:metalloendopeptidase activity"/>
    <property type="evidence" value="ECO:0007669"/>
    <property type="project" value="InterPro"/>
</dbReference>
<dbReference type="GO" id="GO:0006508">
    <property type="term" value="P:proteolysis"/>
    <property type="evidence" value="ECO:0007669"/>
    <property type="project" value="UniProtKB-KW"/>
</dbReference>
<dbReference type="CDD" id="cd09597">
    <property type="entry name" value="M4_TLP"/>
    <property type="match status" value="1"/>
</dbReference>
<dbReference type="Gene3D" id="3.10.170.10">
    <property type="match status" value="1"/>
</dbReference>
<dbReference type="Gene3D" id="1.10.390.10">
    <property type="entry name" value="Neutral Protease Domain 2"/>
    <property type="match status" value="1"/>
</dbReference>
<dbReference type="InterPro" id="IPR023612">
    <property type="entry name" value="Peptidase_M4"/>
</dbReference>
<dbReference type="InterPro" id="IPR027268">
    <property type="entry name" value="Peptidase_M4/M1_CTD_sf"/>
</dbReference>
<dbReference type="InterPro" id="IPR001570">
    <property type="entry name" value="Peptidase_M4_C_domain"/>
</dbReference>
<dbReference type="InterPro" id="IPR013856">
    <property type="entry name" value="Peptidase_M4_domain"/>
</dbReference>
<dbReference type="InterPro" id="IPR050728">
    <property type="entry name" value="Zinc_Metalloprotease_M4"/>
</dbReference>
<dbReference type="PANTHER" id="PTHR33794">
    <property type="entry name" value="BACILLOLYSIN"/>
    <property type="match status" value="1"/>
</dbReference>
<dbReference type="PANTHER" id="PTHR33794:SF1">
    <property type="entry name" value="BACILLOLYSIN"/>
    <property type="match status" value="1"/>
</dbReference>
<dbReference type="Pfam" id="PF01447">
    <property type="entry name" value="Peptidase_M4"/>
    <property type="match status" value="1"/>
</dbReference>
<dbReference type="Pfam" id="PF02868">
    <property type="entry name" value="Peptidase_M4_C"/>
    <property type="match status" value="1"/>
</dbReference>
<dbReference type="PRINTS" id="PR00730">
    <property type="entry name" value="THERMOLYSIN"/>
</dbReference>
<dbReference type="SUPFAM" id="SSF55486">
    <property type="entry name" value="Metalloproteases ('zincins'), catalytic domain"/>
    <property type="match status" value="1"/>
</dbReference>
<dbReference type="PROSITE" id="PS00142">
    <property type="entry name" value="ZINC_PROTEASE"/>
    <property type="match status" value="1"/>
</dbReference>
<protein>
    <recommendedName>
        <fullName>Neutral protease NprE</fullName>
        <ecNumber>3.4.24.28</ecNumber>
    </recommendedName>
    <alternativeName>
        <fullName>Bacillolysin-like protease</fullName>
    </alternativeName>
    <alternativeName>
        <fullName>Milk-clotting protease from Bacillus mesentericus strain 76</fullName>
        <shortName>MCP 76</shortName>
    </alternativeName>
</protein>